<sequence length="1438" mass="162950">MAMTNQEKFKVLADQIKVSNQLDQTIIEKGELTRVDVSNKNRTWEFQITLPYFLSHEDYLIFTNAITEEFKEIAKVDWHFTIQDTSNQDEHAIKYFGHCIEHTALSPKVKGQLKQKRLIMSGNVLKVMTSNDIERNHFDKVCNGSLVKAFRKCGFDIDKVVFETDDSSSYDDLASLEAHIQEEDEKSAREATEKIEKIKAEKAKQQDNNESNVDKCQIGKPIQIDNIKPIESIIEEEFKVAIEGVIFDINLKELKSGRHIVELKVTDYTDSLVLKMFTRKNKDDLDHFKALSVGKWVRAQGRIEEDTFVRDLVMMMTDIEEIKKTPKQDKAEEKRVEFHLHTSMSQMDGIPNISAYVNQAAKWGHKAIAVTDHNVVQAFPDAHGAAEKNGIKMIYGMEGMLVDDGVPIAYKPTDRDLKEATYVVFDVETTGLSNQYDQIIELAAVKVKDGEIIDKFERFSNPHEKLSETIINLTHITDDMLTDAPEIEEVLTEFKEWVGDAIFVAHNASFDMGFIDTGYERLGFGPSTNGVIDTLELSRTINTEYGKHGLNFLAKKYGVELTQHHRAIYDTESTAYIFIKMVQQMKELGVTNHKDINQKLSNEDAYKRARPTHVTLIVQTQEGLKNLFKIVSASLVKYYYRTPRIPRSLLNEYREGILVGTACDEGELFTAVMQRDQSEVEKIAKYYDFIEVQPPKLYQDLIDRELIRDTETLYEIYERILKAGESTGIPVIATGNAHYLYEHDAIARKILIASQPGNPLNRSTLPEAHFRTTDEMLDEFHFLGEEKAHEIVVKNTNELADRIEKVIPIKDQLFTPRMDGANEEIRELSYTNAKKLYGEDLPQIVIDRLEKELASIIGNGFSVIYLISQRLVKKSLDDGYLVGSRGSVGSSFVATMTEITEVNPLPPHYICPNCKTSEFFDDGSVGSGFDLPDKQCSTCGAELIKEGQDIPFETFLGFKGDKVPDIDLNFSGEYQPNAHNYTKVLFGEDKVFRAGTIGTVAEKTAFGYVKGYLNDQGIHKRGAEIDRLVKGCTGVKRTTGQHPGGIIVVPDYMDIYDFTPIQYPADDQSASWMTTHFDFHSIHDNVLKLDILGHDDPTMIRMLQDLSGIDPKTIPVDDKETMQIFSSPESLGVTEEEILCKTGTFGVPEFGTGFVRQMLEDTKPTTFSELVQISGLSHGTDVWLGNAQELIRSGICDLSSVIGCRDDIMVYLMYAGLEPSMAFKTMESVRKGKGLTEEMIDAMKENNVPDWYLDSCLKIKYMFPKAHAAAYVLMAVRIAYFKVHHPLYYYASYFTIRASDFDLITMIKDKESIKNTVKDMYSRYMDLGKKEKDVLTVLEIMNEMAHRGFRMQPISLEKSQAFDFIIEGDTLIPPFISVPGLGENVAKRIVEAREDGPFLSKEDLNKKAGLSQKIIEYLDDLGSLPNLPDKAQLSIFDM</sequence>
<dbReference type="EC" id="2.7.7.7" evidence="1"/>
<dbReference type="EMBL" id="AP006716">
    <property type="protein sequence ID" value="BAE04959.1"/>
    <property type="molecule type" value="Genomic_DNA"/>
</dbReference>
<dbReference type="RefSeq" id="WP_011275936.1">
    <property type="nucleotide sequence ID" value="NC_007168.1"/>
</dbReference>
<dbReference type="SMR" id="Q4L5W6"/>
<dbReference type="KEGG" id="sha:SH1650"/>
<dbReference type="eggNOG" id="COG2176">
    <property type="taxonomic scope" value="Bacteria"/>
</dbReference>
<dbReference type="HOGENOM" id="CLU_003297_2_0_9"/>
<dbReference type="OrthoDB" id="9804290at2"/>
<dbReference type="Proteomes" id="UP000000543">
    <property type="component" value="Chromosome"/>
</dbReference>
<dbReference type="GO" id="GO:0005737">
    <property type="term" value="C:cytoplasm"/>
    <property type="evidence" value="ECO:0007669"/>
    <property type="project" value="UniProtKB-SubCell"/>
</dbReference>
<dbReference type="GO" id="GO:0008408">
    <property type="term" value="F:3'-5' exonuclease activity"/>
    <property type="evidence" value="ECO:0007669"/>
    <property type="project" value="UniProtKB-UniRule"/>
</dbReference>
<dbReference type="GO" id="GO:0003677">
    <property type="term" value="F:DNA binding"/>
    <property type="evidence" value="ECO:0007669"/>
    <property type="project" value="UniProtKB-UniRule"/>
</dbReference>
<dbReference type="GO" id="GO:0003887">
    <property type="term" value="F:DNA-directed DNA polymerase activity"/>
    <property type="evidence" value="ECO:0007669"/>
    <property type="project" value="UniProtKB-UniRule"/>
</dbReference>
<dbReference type="GO" id="GO:0006261">
    <property type="term" value="P:DNA-templated DNA replication"/>
    <property type="evidence" value="ECO:0007669"/>
    <property type="project" value="UniProtKB-UniRule"/>
</dbReference>
<dbReference type="CDD" id="cd06127">
    <property type="entry name" value="DEDDh"/>
    <property type="match status" value="1"/>
</dbReference>
<dbReference type="CDD" id="cd07435">
    <property type="entry name" value="PHP_PolIIIA_POLC"/>
    <property type="match status" value="1"/>
</dbReference>
<dbReference type="CDD" id="cd04484">
    <property type="entry name" value="polC_OBF"/>
    <property type="match status" value="1"/>
</dbReference>
<dbReference type="FunFam" id="3.30.420.10:FF:000045">
    <property type="entry name" value="3'-5' exonuclease DinG"/>
    <property type="match status" value="1"/>
</dbReference>
<dbReference type="Gene3D" id="1.10.150.870">
    <property type="match status" value="1"/>
</dbReference>
<dbReference type="Gene3D" id="3.30.1900.20">
    <property type="match status" value="2"/>
</dbReference>
<dbReference type="Gene3D" id="6.10.140.1510">
    <property type="match status" value="1"/>
</dbReference>
<dbReference type="Gene3D" id="3.20.20.140">
    <property type="entry name" value="Metal-dependent hydrolases"/>
    <property type="match status" value="1"/>
</dbReference>
<dbReference type="Gene3D" id="2.40.50.140">
    <property type="entry name" value="Nucleic acid-binding proteins"/>
    <property type="match status" value="1"/>
</dbReference>
<dbReference type="Gene3D" id="1.10.150.700">
    <property type="entry name" value="PolC, middle finger domain"/>
    <property type="match status" value="1"/>
</dbReference>
<dbReference type="Gene3D" id="3.30.420.10">
    <property type="entry name" value="Ribonuclease H-like superfamily/Ribonuclease H"/>
    <property type="match status" value="1"/>
</dbReference>
<dbReference type="HAMAP" id="MF_00356">
    <property type="entry name" value="DNApol_PolC"/>
    <property type="match status" value="1"/>
</dbReference>
<dbReference type="InterPro" id="IPR011708">
    <property type="entry name" value="DNA_pol3_alpha_NTPase_dom"/>
</dbReference>
<dbReference type="InterPro" id="IPR040982">
    <property type="entry name" value="DNA_pol3_finger"/>
</dbReference>
<dbReference type="InterPro" id="IPR024754">
    <property type="entry name" value="DNA_PolC-like_N_II"/>
</dbReference>
<dbReference type="InterPro" id="IPR028112">
    <property type="entry name" value="DNA_PolC-type_N_I"/>
</dbReference>
<dbReference type="InterPro" id="IPR004805">
    <property type="entry name" value="DnaE2/DnaE/PolC"/>
</dbReference>
<dbReference type="InterPro" id="IPR029460">
    <property type="entry name" value="DNAPol_HHH"/>
</dbReference>
<dbReference type="InterPro" id="IPR006054">
    <property type="entry name" value="DnaQ"/>
</dbReference>
<dbReference type="InterPro" id="IPR013520">
    <property type="entry name" value="Exonuclease_RNaseT/DNA_pol3"/>
</dbReference>
<dbReference type="InterPro" id="IPR012340">
    <property type="entry name" value="NA-bd_OB-fold"/>
</dbReference>
<dbReference type="InterPro" id="IPR004013">
    <property type="entry name" value="PHP_dom"/>
</dbReference>
<dbReference type="InterPro" id="IPR003141">
    <property type="entry name" value="Pol/His_phosphatase_N"/>
</dbReference>
<dbReference type="InterPro" id="IPR006308">
    <property type="entry name" value="Pol_III_a_PolC-type_gram_pos"/>
</dbReference>
<dbReference type="InterPro" id="IPR044923">
    <property type="entry name" value="PolC_middle_finger_sf"/>
</dbReference>
<dbReference type="InterPro" id="IPR012337">
    <property type="entry name" value="RNaseH-like_sf"/>
</dbReference>
<dbReference type="InterPro" id="IPR036397">
    <property type="entry name" value="RNaseH_sf"/>
</dbReference>
<dbReference type="NCBIfam" id="TIGR00573">
    <property type="entry name" value="dnaq"/>
    <property type="match status" value="1"/>
</dbReference>
<dbReference type="NCBIfam" id="TIGR01405">
    <property type="entry name" value="polC_Gram_pos"/>
    <property type="match status" value="1"/>
</dbReference>
<dbReference type="NCBIfam" id="NF001688">
    <property type="entry name" value="PRK00448.1"/>
    <property type="match status" value="1"/>
</dbReference>
<dbReference type="PANTHER" id="PTHR32294:SF5">
    <property type="entry name" value="DNA POLYMERASE III POLC-TYPE"/>
    <property type="match status" value="1"/>
</dbReference>
<dbReference type="PANTHER" id="PTHR32294">
    <property type="entry name" value="DNA POLYMERASE III SUBUNIT ALPHA"/>
    <property type="match status" value="1"/>
</dbReference>
<dbReference type="Pfam" id="PF14480">
    <property type="entry name" value="DNA_pol3_a_NI"/>
    <property type="match status" value="1"/>
</dbReference>
<dbReference type="Pfam" id="PF11490">
    <property type="entry name" value="DNA_pol3_a_NII"/>
    <property type="match status" value="1"/>
</dbReference>
<dbReference type="Pfam" id="PF07733">
    <property type="entry name" value="DNA_pol3_alpha"/>
    <property type="match status" value="2"/>
</dbReference>
<dbReference type="Pfam" id="PF17657">
    <property type="entry name" value="DNA_pol3_finger"/>
    <property type="match status" value="1"/>
</dbReference>
<dbReference type="Pfam" id="PF14579">
    <property type="entry name" value="HHH_6"/>
    <property type="match status" value="1"/>
</dbReference>
<dbReference type="Pfam" id="PF02811">
    <property type="entry name" value="PHP"/>
    <property type="match status" value="2"/>
</dbReference>
<dbReference type="Pfam" id="PF00929">
    <property type="entry name" value="RNase_T"/>
    <property type="match status" value="1"/>
</dbReference>
<dbReference type="SMART" id="SM00479">
    <property type="entry name" value="EXOIII"/>
    <property type="match status" value="1"/>
</dbReference>
<dbReference type="SMART" id="SM00481">
    <property type="entry name" value="POLIIIAc"/>
    <property type="match status" value="1"/>
</dbReference>
<dbReference type="SUPFAM" id="SSF81585">
    <property type="entry name" value="PsbU/PolX domain-like"/>
    <property type="match status" value="1"/>
</dbReference>
<dbReference type="SUPFAM" id="SSF53098">
    <property type="entry name" value="Ribonuclease H-like"/>
    <property type="match status" value="1"/>
</dbReference>
<keyword id="KW-0963">Cytoplasm</keyword>
<keyword id="KW-0235">DNA replication</keyword>
<keyword id="KW-0239">DNA-directed DNA polymerase</keyword>
<keyword id="KW-0269">Exonuclease</keyword>
<keyword id="KW-0378">Hydrolase</keyword>
<keyword id="KW-0540">Nuclease</keyword>
<keyword id="KW-0548">Nucleotidyltransferase</keyword>
<keyword id="KW-0808">Transferase</keyword>
<organism>
    <name type="scientific">Staphylococcus haemolyticus (strain JCSC1435)</name>
    <dbReference type="NCBI Taxonomy" id="279808"/>
    <lineage>
        <taxon>Bacteria</taxon>
        <taxon>Bacillati</taxon>
        <taxon>Bacillota</taxon>
        <taxon>Bacilli</taxon>
        <taxon>Bacillales</taxon>
        <taxon>Staphylococcaceae</taxon>
        <taxon>Staphylococcus</taxon>
    </lineage>
</organism>
<comment type="function">
    <text evidence="1">Required for replicative DNA synthesis. This DNA polymerase also exhibits 3' to 5' exonuclease activity.</text>
</comment>
<comment type="catalytic activity">
    <reaction evidence="1">
        <text>DNA(n) + a 2'-deoxyribonucleoside 5'-triphosphate = DNA(n+1) + diphosphate</text>
        <dbReference type="Rhea" id="RHEA:22508"/>
        <dbReference type="Rhea" id="RHEA-COMP:17339"/>
        <dbReference type="Rhea" id="RHEA-COMP:17340"/>
        <dbReference type="ChEBI" id="CHEBI:33019"/>
        <dbReference type="ChEBI" id="CHEBI:61560"/>
        <dbReference type="ChEBI" id="CHEBI:173112"/>
        <dbReference type="EC" id="2.7.7.7"/>
    </reaction>
</comment>
<comment type="subcellular location">
    <subcellularLocation>
        <location evidence="1">Cytoplasm</location>
    </subcellularLocation>
</comment>
<comment type="similarity">
    <text evidence="1">Belongs to the DNA polymerase type-C family. PolC subfamily.</text>
</comment>
<feature type="chain" id="PRO_1000048481" description="DNA polymerase III PolC-type">
    <location>
        <begin position="1"/>
        <end position="1438"/>
    </location>
</feature>
<feature type="domain" description="Exonuclease">
    <location>
        <begin position="422"/>
        <end position="578"/>
    </location>
</feature>
<proteinExistence type="inferred from homology"/>
<protein>
    <recommendedName>
        <fullName evidence="1">DNA polymerase III PolC-type</fullName>
        <shortName evidence="1">PolIII</shortName>
        <ecNumber evidence="1">2.7.7.7</ecNumber>
    </recommendedName>
</protein>
<name>DPO3_STAHJ</name>
<reference key="1">
    <citation type="journal article" date="2005" name="J. Bacteriol.">
        <title>Whole-genome sequencing of Staphylococcus haemolyticus uncovers the extreme plasticity of its genome and the evolution of human-colonizing staphylococcal species.</title>
        <authorList>
            <person name="Takeuchi F."/>
            <person name="Watanabe S."/>
            <person name="Baba T."/>
            <person name="Yuzawa H."/>
            <person name="Ito T."/>
            <person name="Morimoto Y."/>
            <person name="Kuroda M."/>
            <person name="Cui L."/>
            <person name="Takahashi M."/>
            <person name="Ankai A."/>
            <person name="Baba S."/>
            <person name="Fukui S."/>
            <person name="Lee J.C."/>
            <person name="Hiramatsu K."/>
        </authorList>
    </citation>
    <scope>NUCLEOTIDE SEQUENCE [LARGE SCALE GENOMIC DNA]</scope>
    <source>
        <strain>JCSC1435</strain>
    </source>
</reference>
<gene>
    <name evidence="1" type="primary">polC</name>
    <name type="ordered locus">SH1650</name>
</gene>
<evidence type="ECO:0000255" key="1">
    <source>
        <dbReference type="HAMAP-Rule" id="MF_00356"/>
    </source>
</evidence>
<accession>Q4L5W6</accession>